<protein>
    <recommendedName>
        <fullName evidence="1">Protein YcgL</fullName>
    </recommendedName>
</protein>
<reference key="1">
    <citation type="journal article" date="2002" name="Nucleic Acids Res.">
        <title>Genome sequence of Shigella flexneri 2a: insights into pathogenicity through comparison with genomes of Escherichia coli K12 and O157.</title>
        <authorList>
            <person name="Jin Q."/>
            <person name="Yuan Z."/>
            <person name="Xu J."/>
            <person name="Wang Y."/>
            <person name="Shen Y."/>
            <person name="Lu W."/>
            <person name="Wang J."/>
            <person name="Liu H."/>
            <person name="Yang J."/>
            <person name="Yang F."/>
            <person name="Zhang X."/>
            <person name="Zhang J."/>
            <person name="Yang G."/>
            <person name="Wu H."/>
            <person name="Qu D."/>
            <person name="Dong J."/>
            <person name="Sun L."/>
            <person name="Xue Y."/>
            <person name="Zhao A."/>
            <person name="Gao Y."/>
            <person name="Zhu J."/>
            <person name="Kan B."/>
            <person name="Ding K."/>
            <person name="Chen S."/>
            <person name="Cheng H."/>
            <person name="Yao Z."/>
            <person name="He B."/>
            <person name="Chen R."/>
            <person name="Ma D."/>
            <person name="Qiang B."/>
            <person name="Wen Y."/>
            <person name="Hou Y."/>
            <person name="Yu J."/>
        </authorList>
    </citation>
    <scope>NUCLEOTIDE SEQUENCE [LARGE SCALE GENOMIC DNA]</scope>
    <source>
        <strain>301 / Serotype 2a</strain>
    </source>
</reference>
<reference key="2">
    <citation type="journal article" date="2003" name="Infect. Immun.">
        <title>Complete genome sequence and comparative genomics of Shigella flexneri serotype 2a strain 2457T.</title>
        <authorList>
            <person name="Wei J."/>
            <person name="Goldberg M.B."/>
            <person name="Burland V."/>
            <person name="Venkatesan M.M."/>
            <person name="Deng W."/>
            <person name="Fournier G."/>
            <person name="Mayhew G.F."/>
            <person name="Plunkett G. III"/>
            <person name="Rose D.J."/>
            <person name="Darling A."/>
            <person name="Mau B."/>
            <person name="Perna N.T."/>
            <person name="Payne S.M."/>
            <person name="Runyen-Janecky L.J."/>
            <person name="Zhou S."/>
            <person name="Schwartz D.C."/>
            <person name="Blattner F.R."/>
        </authorList>
    </citation>
    <scope>NUCLEOTIDE SEQUENCE [LARGE SCALE GENOMIC DNA]</scope>
    <source>
        <strain>ATCC 700930 / 2457T / Serotype 2a</strain>
    </source>
</reference>
<name>YCGL_SHIFL</name>
<accession>Q83LF2</accession>
<accession>Q7UCT9</accession>
<feature type="chain" id="PRO_0000375385" description="Protein YcgL">
    <location>
        <begin position="1"/>
        <end position="108"/>
    </location>
</feature>
<feature type="domain" description="YcgL" evidence="1">
    <location>
        <begin position="12"/>
        <end position="96"/>
    </location>
</feature>
<feature type="sequence conflict" description="In Ref. 2; AAP16675." evidence="2" ref="2">
    <original>V</original>
    <variation>A</variation>
    <location>
        <position position="15"/>
    </location>
</feature>
<keyword id="KW-1185">Reference proteome</keyword>
<sequence length="108" mass="12400">MPKPGILKSKSMFCVIYRSSKRDQTYLYVEKKDDFSRVPEELMKGFGQPQLAMILPLDGRKKLVNADIEKVKLALTEQGYYLQLPPPPEDLLKQHLSVMGQKTDDTNK</sequence>
<organism>
    <name type="scientific">Shigella flexneri</name>
    <dbReference type="NCBI Taxonomy" id="623"/>
    <lineage>
        <taxon>Bacteria</taxon>
        <taxon>Pseudomonadati</taxon>
        <taxon>Pseudomonadota</taxon>
        <taxon>Gammaproteobacteria</taxon>
        <taxon>Enterobacterales</taxon>
        <taxon>Enterobacteriaceae</taxon>
        <taxon>Shigella</taxon>
    </lineage>
</organism>
<proteinExistence type="inferred from homology"/>
<evidence type="ECO:0000255" key="1">
    <source>
        <dbReference type="HAMAP-Rule" id="MF_01866"/>
    </source>
</evidence>
<evidence type="ECO:0000305" key="2"/>
<gene>
    <name evidence="1" type="primary">ycgL</name>
    <name type="ordered locus">SF1168</name>
    <name type="ordered locus">S1256</name>
</gene>
<dbReference type="EMBL" id="AE005674">
    <property type="protein sequence ID" value="AAN42784.1"/>
    <property type="molecule type" value="Genomic_DNA"/>
</dbReference>
<dbReference type="EMBL" id="AE014073">
    <property type="protein sequence ID" value="AAP16675.1"/>
    <property type="molecule type" value="Genomic_DNA"/>
</dbReference>
<dbReference type="RefSeq" id="NP_707077.1">
    <property type="nucleotide sequence ID" value="NC_004337.2"/>
</dbReference>
<dbReference type="SMR" id="Q83LF2"/>
<dbReference type="STRING" id="198214.SF1168"/>
<dbReference type="PaxDb" id="198214-SF1168"/>
<dbReference type="GeneID" id="1024128"/>
<dbReference type="KEGG" id="sfl:SF1168"/>
<dbReference type="KEGG" id="sfx:S1256"/>
<dbReference type="PATRIC" id="fig|198214.7.peg.1381"/>
<dbReference type="HOGENOM" id="CLU_155118_1_0_6"/>
<dbReference type="Proteomes" id="UP000001006">
    <property type="component" value="Chromosome"/>
</dbReference>
<dbReference type="Proteomes" id="UP000002673">
    <property type="component" value="Chromosome"/>
</dbReference>
<dbReference type="Gene3D" id="3.10.510.20">
    <property type="entry name" value="YcgL domain"/>
    <property type="match status" value="1"/>
</dbReference>
<dbReference type="HAMAP" id="MF_01866">
    <property type="entry name" value="UPF0745"/>
    <property type="match status" value="1"/>
</dbReference>
<dbReference type="InterPro" id="IPR038068">
    <property type="entry name" value="YcgL-like_sf"/>
</dbReference>
<dbReference type="InterPro" id="IPR027354">
    <property type="entry name" value="YcgL_dom"/>
</dbReference>
<dbReference type="PANTHER" id="PTHR38109">
    <property type="entry name" value="PROTEIN YCGL"/>
    <property type="match status" value="1"/>
</dbReference>
<dbReference type="PANTHER" id="PTHR38109:SF1">
    <property type="entry name" value="PROTEIN YCGL"/>
    <property type="match status" value="1"/>
</dbReference>
<dbReference type="Pfam" id="PF05166">
    <property type="entry name" value="YcgL"/>
    <property type="match status" value="1"/>
</dbReference>
<dbReference type="SUPFAM" id="SSF160191">
    <property type="entry name" value="YcgL-like"/>
    <property type="match status" value="1"/>
</dbReference>
<dbReference type="PROSITE" id="PS51648">
    <property type="entry name" value="YCGL"/>
    <property type="match status" value="1"/>
</dbReference>